<reference key="1">
    <citation type="journal article" date="2004" name="Nat. Biotechnol.">
        <title>Complete genome sequence of the metabolically versatile photosynthetic bacterium Rhodopseudomonas palustris.</title>
        <authorList>
            <person name="Larimer F.W."/>
            <person name="Chain P."/>
            <person name="Hauser L."/>
            <person name="Lamerdin J.E."/>
            <person name="Malfatti S."/>
            <person name="Do L."/>
            <person name="Land M.L."/>
            <person name="Pelletier D.A."/>
            <person name="Beatty J.T."/>
            <person name="Lang A.S."/>
            <person name="Tabita F.R."/>
            <person name="Gibson J.L."/>
            <person name="Hanson T.E."/>
            <person name="Bobst C."/>
            <person name="Torres y Torres J.L."/>
            <person name="Peres C."/>
            <person name="Harrison F.H."/>
            <person name="Gibson J."/>
            <person name="Harwood C.S."/>
        </authorList>
    </citation>
    <scope>NUCLEOTIDE SEQUENCE [LARGE SCALE GENOMIC DNA]</scope>
    <source>
        <strain>ATCC BAA-98 / CGA009</strain>
    </source>
</reference>
<dbReference type="EMBL" id="BX572601">
    <property type="protein sequence ID" value="CAE27954.1"/>
    <property type="molecule type" value="Genomic_DNA"/>
</dbReference>
<dbReference type="RefSeq" id="WP_011158063.1">
    <property type="nucleotide sequence ID" value="NZ_CP116810.1"/>
</dbReference>
<dbReference type="SMR" id="Q6N6V1"/>
<dbReference type="STRING" id="258594.RPA2513"/>
<dbReference type="GeneID" id="66893576"/>
<dbReference type="eggNOG" id="COG0231">
    <property type="taxonomic scope" value="Bacteria"/>
</dbReference>
<dbReference type="HOGENOM" id="CLU_074944_1_1_5"/>
<dbReference type="PhylomeDB" id="Q6N6V1"/>
<dbReference type="UniPathway" id="UPA00345"/>
<dbReference type="GO" id="GO:0005737">
    <property type="term" value="C:cytoplasm"/>
    <property type="evidence" value="ECO:0007669"/>
    <property type="project" value="UniProtKB-SubCell"/>
</dbReference>
<dbReference type="GO" id="GO:0003746">
    <property type="term" value="F:translation elongation factor activity"/>
    <property type="evidence" value="ECO:0007669"/>
    <property type="project" value="UniProtKB-UniRule"/>
</dbReference>
<dbReference type="GO" id="GO:0043043">
    <property type="term" value="P:peptide biosynthetic process"/>
    <property type="evidence" value="ECO:0007669"/>
    <property type="project" value="InterPro"/>
</dbReference>
<dbReference type="CDD" id="cd04470">
    <property type="entry name" value="S1_EF-P_repeat_1"/>
    <property type="match status" value="1"/>
</dbReference>
<dbReference type="CDD" id="cd05794">
    <property type="entry name" value="S1_EF-P_repeat_2"/>
    <property type="match status" value="1"/>
</dbReference>
<dbReference type="FunFam" id="2.40.50.140:FF:000004">
    <property type="entry name" value="Elongation factor P"/>
    <property type="match status" value="1"/>
</dbReference>
<dbReference type="FunFam" id="2.40.50.140:FF:000009">
    <property type="entry name" value="Elongation factor P"/>
    <property type="match status" value="1"/>
</dbReference>
<dbReference type="Gene3D" id="2.30.30.30">
    <property type="match status" value="1"/>
</dbReference>
<dbReference type="Gene3D" id="2.40.50.140">
    <property type="entry name" value="Nucleic acid-binding proteins"/>
    <property type="match status" value="2"/>
</dbReference>
<dbReference type="HAMAP" id="MF_00141">
    <property type="entry name" value="EF_P"/>
    <property type="match status" value="1"/>
</dbReference>
<dbReference type="InterPro" id="IPR015365">
    <property type="entry name" value="Elong-fact-P_C"/>
</dbReference>
<dbReference type="InterPro" id="IPR012340">
    <property type="entry name" value="NA-bd_OB-fold"/>
</dbReference>
<dbReference type="InterPro" id="IPR014722">
    <property type="entry name" value="Rib_uL2_dom2"/>
</dbReference>
<dbReference type="InterPro" id="IPR020599">
    <property type="entry name" value="Transl_elong_fac_P/YeiP"/>
</dbReference>
<dbReference type="InterPro" id="IPR013185">
    <property type="entry name" value="Transl_elong_KOW-like"/>
</dbReference>
<dbReference type="InterPro" id="IPR001059">
    <property type="entry name" value="Transl_elong_P/YeiP_cen"/>
</dbReference>
<dbReference type="InterPro" id="IPR013852">
    <property type="entry name" value="Transl_elong_P/YeiP_CS"/>
</dbReference>
<dbReference type="InterPro" id="IPR011768">
    <property type="entry name" value="Transl_elongation_fac_P"/>
</dbReference>
<dbReference type="InterPro" id="IPR008991">
    <property type="entry name" value="Translation_prot_SH3-like_sf"/>
</dbReference>
<dbReference type="NCBIfam" id="TIGR00038">
    <property type="entry name" value="efp"/>
    <property type="match status" value="1"/>
</dbReference>
<dbReference type="NCBIfam" id="NF001810">
    <property type="entry name" value="PRK00529.1"/>
    <property type="match status" value="1"/>
</dbReference>
<dbReference type="PANTHER" id="PTHR30053">
    <property type="entry name" value="ELONGATION FACTOR P"/>
    <property type="match status" value="1"/>
</dbReference>
<dbReference type="PANTHER" id="PTHR30053:SF14">
    <property type="entry name" value="TRANSLATION ELONGATION FACTOR KOW-LIKE DOMAIN-CONTAINING PROTEIN"/>
    <property type="match status" value="1"/>
</dbReference>
<dbReference type="Pfam" id="PF01132">
    <property type="entry name" value="EFP"/>
    <property type="match status" value="1"/>
</dbReference>
<dbReference type="Pfam" id="PF08207">
    <property type="entry name" value="EFP_N"/>
    <property type="match status" value="1"/>
</dbReference>
<dbReference type="Pfam" id="PF09285">
    <property type="entry name" value="Elong-fact-P_C"/>
    <property type="match status" value="1"/>
</dbReference>
<dbReference type="PIRSF" id="PIRSF005901">
    <property type="entry name" value="EF-P"/>
    <property type="match status" value="1"/>
</dbReference>
<dbReference type="SMART" id="SM01185">
    <property type="entry name" value="EFP"/>
    <property type="match status" value="1"/>
</dbReference>
<dbReference type="SMART" id="SM00841">
    <property type="entry name" value="Elong-fact-P_C"/>
    <property type="match status" value="1"/>
</dbReference>
<dbReference type="SUPFAM" id="SSF50249">
    <property type="entry name" value="Nucleic acid-binding proteins"/>
    <property type="match status" value="2"/>
</dbReference>
<dbReference type="SUPFAM" id="SSF50104">
    <property type="entry name" value="Translation proteins SH3-like domain"/>
    <property type="match status" value="1"/>
</dbReference>
<dbReference type="PROSITE" id="PS01275">
    <property type="entry name" value="EFP"/>
    <property type="match status" value="1"/>
</dbReference>
<sequence>MRVIASSIRKGNVLEQDGKLYVVLSAENIHPGKGTPVSQIEMRRISDGVKISERYKTTDQVEKVTIEERNYSFLYEDGEGFHFMEPESYDQVQVTKDVVGSAAPYLQEGMVVKLSMHDTTAVAITLPQRATLEVVDTEPVTKGQTASSSYKPAVLSNGVRTQVPPHIGTGTRIVVLTEDGSYVERAKD</sequence>
<evidence type="ECO:0000255" key="1">
    <source>
        <dbReference type="HAMAP-Rule" id="MF_00141"/>
    </source>
</evidence>
<protein>
    <recommendedName>
        <fullName evidence="1">Elongation factor P</fullName>
        <shortName evidence="1">EF-P</shortName>
    </recommendedName>
</protein>
<keyword id="KW-0963">Cytoplasm</keyword>
<keyword id="KW-0251">Elongation factor</keyword>
<keyword id="KW-0648">Protein biosynthesis</keyword>
<name>EFP_RHOPA</name>
<organism>
    <name type="scientific">Rhodopseudomonas palustris (strain ATCC BAA-98 / CGA009)</name>
    <dbReference type="NCBI Taxonomy" id="258594"/>
    <lineage>
        <taxon>Bacteria</taxon>
        <taxon>Pseudomonadati</taxon>
        <taxon>Pseudomonadota</taxon>
        <taxon>Alphaproteobacteria</taxon>
        <taxon>Hyphomicrobiales</taxon>
        <taxon>Nitrobacteraceae</taxon>
        <taxon>Rhodopseudomonas</taxon>
    </lineage>
</organism>
<gene>
    <name evidence="1" type="primary">efp</name>
    <name type="ordered locus">RPA2513</name>
</gene>
<comment type="function">
    <text evidence="1">Involved in peptide bond synthesis. Stimulates efficient translation and peptide-bond synthesis on native or reconstituted 70S ribosomes in vitro. Probably functions indirectly by altering the affinity of the ribosome for aminoacyl-tRNA, thus increasing their reactivity as acceptors for peptidyl transferase.</text>
</comment>
<comment type="pathway">
    <text evidence="1">Protein biosynthesis; polypeptide chain elongation.</text>
</comment>
<comment type="subcellular location">
    <subcellularLocation>
        <location evidence="1">Cytoplasm</location>
    </subcellularLocation>
</comment>
<comment type="similarity">
    <text evidence="1">Belongs to the elongation factor P family.</text>
</comment>
<accession>Q6N6V1</accession>
<feature type="chain" id="PRO_0000094318" description="Elongation factor P">
    <location>
        <begin position="1"/>
        <end position="188"/>
    </location>
</feature>
<proteinExistence type="inferred from homology"/>